<organism>
    <name type="scientific">Mesorhizobium japonicum (strain LMG 29417 / CECT 9101 / MAFF 303099)</name>
    <name type="common">Mesorhizobium loti (strain MAFF 303099)</name>
    <dbReference type="NCBI Taxonomy" id="266835"/>
    <lineage>
        <taxon>Bacteria</taxon>
        <taxon>Pseudomonadati</taxon>
        <taxon>Pseudomonadota</taxon>
        <taxon>Alphaproteobacteria</taxon>
        <taxon>Hyphomicrobiales</taxon>
        <taxon>Phyllobacteriaceae</taxon>
        <taxon>Mesorhizobium</taxon>
    </lineage>
</organism>
<comment type="function">
    <text evidence="1">Involved in base excision repair of DNA damaged by oxidation or by mutagenic agents. Acts as a DNA glycosylase that recognizes and removes damaged bases. Has a preference for oxidized purines, such as 7,8-dihydro-8-oxoguanine (8-oxoG). Has AP (apurinic/apyrimidinic) lyase activity and introduces nicks in the DNA strand. Cleaves the DNA backbone by beta-delta elimination to generate a single-strand break at the site of the removed base with both 3'- and 5'-phosphates (By similarity).</text>
</comment>
<comment type="catalytic activity">
    <reaction>
        <text>Hydrolysis of DNA containing ring-opened 7-methylguanine residues, releasing 2,6-diamino-4-hydroxy-5-(N-methyl)formamidopyrimidine.</text>
        <dbReference type="EC" id="3.2.2.23"/>
    </reaction>
</comment>
<comment type="catalytic activity">
    <reaction>
        <text>2'-deoxyribonucleotide-(2'-deoxyribose 5'-phosphate)-2'-deoxyribonucleotide-DNA = a 3'-end 2'-deoxyribonucleotide-(2,3-dehydro-2,3-deoxyribose 5'-phosphate)-DNA + a 5'-end 5'-phospho-2'-deoxyribonucleoside-DNA + H(+)</text>
        <dbReference type="Rhea" id="RHEA:66592"/>
        <dbReference type="Rhea" id="RHEA-COMP:13180"/>
        <dbReference type="Rhea" id="RHEA-COMP:16897"/>
        <dbReference type="Rhea" id="RHEA-COMP:17067"/>
        <dbReference type="ChEBI" id="CHEBI:15378"/>
        <dbReference type="ChEBI" id="CHEBI:136412"/>
        <dbReference type="ChEBI" id="CHEBI:157695"/>
        <dbReference type="ChEBI" id="CHEBI:167181"/>
        <dbReference type="EC" id="4.2.99.18"/>
    </reaction>
</comment>
<comment type="cofactor">
    <cofactor evidence="1">
        <name>Zn(2+)</name>
        <dbReference type="ChEBI" id="CHEBI:29105"/>
    </cofactor>
    <text evidence="1">Binds 1 zinc ion per subunit.</text>
</comment>
<comment type="subunit">
    <text evidence="1">Monomer.</text>
</comment>
<comment type="similarity">
    <text evidence="2">Belongs to the FPG family.</text>
</comment>
<name>FPG_RHILO</name>
<evidence type="ECO:0000250" key="1"/>
<evidence type="ECO:0000305" key="2"/>
<dbReference type="EC" id="3.2.2.23"/>
<dbReference type="EC" id="4.2.99.18"/>
<dbReference type="EMBL" id="BA000012">
    <property type="protein sequence ID" value="BAB52006.1"/>
    <property type="molecule type" value="Genomic_DNA"/>
</dbReference>
<dbReference type="RefSeq" id="WP_010913344.1">
    <property type="nucleotide sequence ID" value="NC_002678.2"/>
</dbReference>
<dbReference type="SMR" id="Q98BG6"/>
<dbReference type="KEGG" id="mlo:mll5585"/>
<dbReference type="PATRIC" id="fig|266835.9.peg.4438"/>
<dbReference type="eggNOG" id="COG0266">
    <property type="taxonomic scope" value="Bacteria"/>
</dbReference>
<dbReference type="HOGENOM" id="CLU_038423_1_1_5"/>
<dbReference type="Proteomes" id="UP000000552">
    <property type="component" value="Chromosome"/>
</dbReference>
<dbReference type="GO" id="GO:0034039">
    <property type="term" value="F:8-oxo-7,8-dihydroguanine DNA N-glycosylase activity"/>
    <property type="evidence" value="ECO:0007669"/>
    <property type="project" value="TreeGrafter"/>
</dbReference>
<dbReference type="GO" id="GO:0140078">
    <property type="term" value="F:class I DNA-(apurinic or apyrimidinic site) endonuclease activity"/>
    <property type="evidence" value="ECO:0007669"/>
    <property type="project" value="UniProtKB-EC"/>
</dbReference>
<dbReference type="GO" id="GO:0003684">
    <property type="term" value="F:damaged DNA binding"/>
    <property type="evidence" value="ECO:0007669"/>
    <property type="project" value="InterPro"/>
</dbReference>
<dbReference type="GO" id="GO:0008270">
    <property type="term" value="F:zinc ion binding"/>
    <property type="evidence" value="ECO:0007669"/>
    <property type="project" value="UniProtKB-UniRule"/>
</dbReference>
<dbReference type="GO" id="GO:0006284">
    <property type="term" value="P:base-excision repair"/>
    <property type="evidence" value="ECO:0007669"/>
    <property type="project" value="InterPro"/>
</dbReference>
<dbReference type="CDD" id="cd08966">
    <property type="entry name" value="EcFpg-like_N"/>
    <property type="match status" value="1"/>
</dbReference>
<dbReference type="FunFam" id="1.10.8.50:FF:000003">
    <property type="entry name" value="Formamidopyrimidine-DNA glycosylase"/>
    <property type="match status" value="1"/>
</dbReference>
<dbReference type="Gene3D" id="1.10.8.50">
    <property type="match status" value="1"/>
</dbReference>
<dbReference type="Gene3D" id="3.20.190.10">
    <property type="entry name" value="MutM-like, N-terminal"/>
    <property type="match status" value="1"/>
</dbReference>
<dbReference type="HAMAP" id="MF_00103">
    <property type="entry name" value="Fapy_DNA_glycosyl"/>
    <property type="match status" value="1"/>
</dbReference>
<dbReference type="InterPro" id="IPR015886">
    <property type="entry name" value="DNA_glyclase/AP_lyase_DNA-bd"/>
</dbReference>
<dbReference type="InterPro" id="IPR015887">
    <property type="entry name" value="DNA_glyclase_Znf_dom_DNA_BS"/>
</dbReference>
<dbReference type="InterPro" id="IPR020629">
    <property type="entry name" value="Formamido-pyr_DNA_Glyclase"/>
</dbReference>
<dbReference type="InterPro" id="IPR012319">
    <property type="entry name" value="FPG_cat"/>
</dbReference>
<dbReference type="InterPro" id="IPR035937">
    <property type="entry name" value="MutM-like_N-ter"/>
</dbReference>
<dbReference type="InterPro" id="IPR010979">
    <property type="entry name" value="Ribosomal_uS13-like_H2TH"/>
</dbReference>
<dbReference type="InterPro" id="IPR000214">
    <property type="entry name" value="Znf_DNA_glyclase/AP_lyase"/>
</dbReference>
<dbReference type="InterPro" id="IPR010663">
    <property type="entry name" value="Znf_FPG/IleRS"/>
</dbReference>
<dbReference type="NCBIfam" id="TIGR00577">
    <property type="entry name" value="fpg"/>
    <property type="match status" value="1"/>
</dbReference>
<dbReference type="NCBIfam" id="NF002211">
    <property type="entry name" value="PRK01103.1"/>
    <property type="match status" value="1"/>
</dbReference>
<dbReference type="PANTHER" id="PTHR22993">
    <property type="entry name" value="FORMAMIDOPYRIMIDINE-DNA GLYCOSYLASE"/>
    <property type="match status" value="1"/>
</dbReference>
<dbReference type="PANTHER" id="PTHR22993:SF9">
    <property type="entry name" value="FORMAMIDOPYRIMIDINE-DNA GLYCOSYLASE"/>
    <property type="match status" value="1"/>
</dbReference>
<dbReference type="Pfam" id="PF01149">
    <property type="entry name" value="Fapy_DNA_glyco"/>
    <property type="match status" value="1"/>
</dbReference>
<dbReference type="Pfam" id="PF06831">
    <property type="entry name" value="H2TH"/>
    <property type="match status" value="1"/>
</dbReference>
<dbReference type="Pfam" id="PF06827">
    <property type="entry name" value="zf-FPG_IleRS"/>
    <property type="match status" value="1"/>
</dbReference>
<dbReference type="SMART" id="SM00898">
    <property type="entry name" value="Fapy_DNA_glyco"/>
    <property type="match status" value="1"/>
</dbReference>
<dbReference type="SMART" id="SM01232">
    <property type="entry name" value="H2TH"/>
    <property type="match status" value="1"/>
</dbReference>
<dbReference type="SUPFAM" id="SSF57716">
    <property type="entry name" value="Glucocorticoid receptor-like (DNA-binding domain)"/>
    <property type="match status" value="1"/>
</dbReference>
<dbReference type="SUPFAM" id="SSF81624">
    <property type="entry name" value="N-terminal domain of MutM-like DNA repair proteins"/>
    <property type="match status" value="1"/>
</dbReference>
<dbReference type="SUPFAM" id="SSF46946">
    <property type="entry name" value="S13-like H2TH domain"/>
    <property type="match status" value="1"/>
</dbReference>
<dbReference type="PROSITE" id="PS51068">
    <property type="entry name" value="FPG_CAT"/>
    <property type="match status" value="1"/>
</dbReference>
<dbReference type="PROSITE" id="PS01242">
    <property type="entry name" value="ZF_FPG_1"/>
    <property type="match status" value="1"/>
</dbReference>
<dbReference type="PROSITE" id="PS51066">
    <property type="entry name" value="ZF_FPG_2"/>
    <property type="match status" value="1"/>
</dbReference>
<feature type="initiator methionine" description="Removed" evidence="1">
    <location>
        <position position="1"/>
    </location>
</feature>
<feature type="chain" id="PRO_0000170856" description="Formamidopyrimidine-DNA glycosylase">
    <location>
        <begin position="2"/>
        <end position="296"/>
    </location>
</feature>
<feature type="zinc finger region" description="FPG-type">
    <location>
        <begin position="260"/>
        <end position="296"/>
    </location>
</feature>
<feature type="active site" description="Schiff-base intermediate with DNA" evidence="1">
    <location>
        <position position="2"/>
    </location>
</feature>
<feature type="active site" description="Proton donor" evidence="1">
    <location>
        <position position="3"/>
    </location>
</feature>
<feature type="active site" description="Proton donor; for beta-elimination activity" evidence="1">
    <location>
        <position position="58"/>
    </location>
</feature>
<feature type="active site" description="Proton donor; for delta-elimination activity" evidence="1">
    <location>
        <position position="286"/>
    </location>
</feature>
<feature type="binding site" evidence="1">
    <location>
        <position position="104"/>
    </location>
    <ligand>
        <name>DNA</name>
        <dbReference type="ChEBI" id="CHEBI:16991"/>
    </ligand>
</feature>
<feature type="binding site" evidence="1">
    <location>
        <position position="127"/>
    </location>
    <ligand>
        <name>DNA</name>
        <dbReference type="ChEBI" id="CHEBI:16991"/>
    </ligand>
</feature>
<feature type="binding site" evidence="1">
    <location>
        <position position="169"/>
    </location>
    <ligand>
        <name>DNA</name>
        <dbReference type="ChEBI" id="CHEBI:16991"/>
    </ligand>
</feature>
<accession>Q98BG6</accession>
<gene>
    <name type="primary">mutM</name>
    <name type="synonym">fpg</name>
    <name type="ordered locus">mll5585</name>
</gene>
<reference key="1">
    <citation type="journal article" date="2000" name="DNA Res.">
        <title>Complete genome structure of the nitrogen-fixing symbiotic bacterium Mesorhizobium loti.</title>
        <authorList>
            <person name="Kaneko T."/>
            <person name="Nakamura Y."/>
            <person name="Sato S."/>
            <person name="Asamizu E."/>
            <person name="Kato T."/>
            <person name="Sasamoto S."/>
            <person name="Watanabe A."/>
            <person name="Idesawa K."/>
            <person name="Ishikawa A."/>
            <person name="Kawashima K."/>
            <person name="Kimura T."/>
            <person name="Kishida Y."/>
            <person name="Kiyokawa C."/>
            <person name="Kohara M."/>
            <person name="Matsumoto M."/>
            <person name="Matsuno A."/>
            <person name="Mochizuki Y."/>
            <person name="Nakayama S."/>
            <person name="Nakazaki N."/>
            <person name="Shimpo S."/>
            <person name="Sugimoto M."/>
            <person name="Takeuchi C."/>
            <person name="Yamada M."/>
            <person name="Tabata S."/>
        </authorList>
    </citation>
    <scope>NUCLEOTIDE SEQUENCE [LARGE SCALE GENOMIC DNA]</scope>
    <source>
        <strain>LMG 29417 / CECT 9101 / MAFF 303099</strain>
    </source>
</reference>
<keyword id="KW-0227">DNA damage</keyword>
<keyword id="KW-0234">DNA repair</keyword>
<keyword id="KW-0238">DNA-binding</keyword>
<keyword id="KW-0326">Glycosidase</keyword>
<keyword id="KW-0378">Hydrolase</keyword>
<keyword id="KW-0456">Lyase</keyword>
<keyword id="KW-0479">Metal-binding</keyword>
<keyword id="KW-0511">Multifunctional enzyme</keyword>
<keyword id="KW-0862">Zinc</keyword>
<keyword id="KW-0863">Zinc-finger</keyword>
<proteinExistence type="inferred from homology"/>
<sequence length="296" mass="32367">MPELPEVETVRRGLQPVLEGARLTRVEARRPDLRFPFPERFSERLTGKTITALGRRAKYLTMHVQDGPVLICHLGMSGSFRIETDDDGETPGVFHHERSKSTAHDHVVFDVVAADGARSRVIFNDPRRFGFMLFAEGSPETHPMLAGLGVEPTGNTLDGVLLASLLKGRGSPLKAALLDQKLIAGLGNIYVSEALWRAGLSPLREAGTIARPSKKARQQSERLAEAIRSVISDAIAAGGSSLRDYMHTDGSLGYFQHSFAVYDREGEPCPKPGCGGHIERVVQSGRSTFYCRTCQS</sequence>
<protein>
    <recommendedName>
        <fullName>Formamidopyrimidine-DNA glycosylase</fullName>
        <shortName>Fapy-DNA glycosylase</shortName>
        <ecNumber>3.2.2.23</ecNumber>
    </recommendedName>
    <alternativeName>
        <fullName>DNA-(apurinic or apyrimidinic site) lyase MutM</fullName>
        <shortName>AP lyase MutM</shortName>
        <ecNumber>4.2.99.18</ecNumber>
    </alternativeName>
</protein>